<organism>
    <name type="scientific">Mycobacterium ulcerans (strain Agy99)</name>
    <dbReference type="NCBI Taxonomy" id="362242"/>
    <lineage>
        <taxon>Bacteria</taxon>
        <taxon>Bacillati</taxon>
        <taxon>Actinomycetota</taxon>
        <taxon>Actinomycetes</taxon>
        <taxon>Mycobacteriales</taxon>
        <taxon>Mycobacteriaceae</taxon>
        <taxon>Mycobacterium</taxon>
        <taxon>Mycobacterium ulcerans group</taxon>
    </lineage>
</organism>
<accession>A0PPK9</accession>
<feature type="chain" id="PRO_1000020106" description="Methionyl-tRNA formyltransferase">
    <location>
        <begin position="1"/>
        <end position="312"/>
    </location>
</feature>
<feature type="binding site" evidence="1">
    <location>
        <begin position="110"/>
        <end position="113"/>
    </location>
    <ligand>
        <name>(6S)-5,6,7,8-tetrahydrofolate</name>
        <dbReference type="ChEBI" id="CHEBI:57453"/>
    </ligand>
</feature>
<protein>
    <recommendedName>
        <fullName evidence="1">Methionyl-tRNA formyltransferase</fullName>
        <ecNumber evidence="1">2.1.2.9</ecNumber>
    </recommendedName>
</protein>
<proteinExistence type="inferred from homology"/>
<dbReference type="EC" id="2.1.2.9" evidence="1"/>
<dbReference type="EMBL" id="CP000325">
    <property type="protein sequence ID" value="ABL04278.1"/>
    <property type="molecule type" value="Genomic_DNA"/>
</dbReference>
<dbReference type="RefSeq" id="WP_011739898.1">
    <property type="nucleotide sequence ID" value="NC_008611.1"/>
</dbReference>
<dbReference type="SMR" id="A0PPK9"/>
<dbReference type="KEGG" id="mul:MUL_1802"/>
<dbReference type="eggNOG" id="COG0223">
    <property type="taxonomic scope" value="Bacteria"/>
</dbReference>
<dbReference type="HOGENOM" id="CLU_033347_1_0_11"/>
<dbReference type="Proteomes" id="UP000000765">
    <property type="component" value="Chromosome"/>
</dbReference>
<dbReference type="GO" id="GO:0005829">
    <property type="term" value="C:cytosol"/>
    <property type="evidence" value="ECO:0007669"/>
    <property type="project" value="TreeGrafter"/>
</dbReference>
<dbReference type="GO" id="GO:0004479">
    <property type="term" value="F:methionyl-tRNA formyltransferase activity"/>
    <property type="evidence" value="ECO:0007669"/>
    <property type="project" value="UniProtKB-UniRule"/>
</dbReference>
<dbReference type="CDD" id="cd08646">
    <property type="entry name" value="FMT_core_Met-tRNA-FMT_N"/>
    <property type="match status" value="1"/>
</dbReference>
<dbReference type="CDD" id="cd08704">
    <property type="entry name" value="Met_tRNA_FMT_C"/>
    <property type="match status" value="1"/>
</dbReference>
<dbReference type="FunFam" id="3.40.50.12230:FF:000001">
    <property type="entry name" value="Methionyl-tRNA formyltransferase"/>
    <property type="match status" value="1"/>
</dbReference>
<dbReference type="Gene3D" id="3.40.50.12230">
    <property type="match status" value="1"/>
</dbReference>
<dbReference type="HAMAP" id="MF_00182">
    <property type="entry name" value="Formyl_trans"/>
    <property type="match status" value="1"/>
</dbReference>
<dbReference type="InterPro" id="IPR005794">
    <property type="entry name" value="Fmt"/>
</dbReference>
<dbReference type="InterPro" id="IPR005793">
    <property type="entry name" value="Formyl_trans_C"/>
</dbReference>
<dbReference type="InterPro" id="IPR002376">
    <property type="entry name" value="Formyl_transf_N"/>
</dbReference>
<dbReference type="InterPro" id="IPR036477">
    <property type="entry name" value="Formyl_transf_N_sf"/>
</dbReference>
<dbReference type="InterPro" id="IPR011034">
    <property type="entry name" value="Formyl_transferase-like_C_sf"/>
</dbReference>
<dbReference type="InterPro" id="IPR044135">
    <property type="entry name" value="Met-tRNA-FMT_C"/>
</dbReference>
<dbReference type="InterPro" id="IPR041711">
    <property type="entry name" value="Met-tRNA-FMT_N"/>
</dbReference>
<dbReference type="NCBIfam" id="TIGR00460">
    <property type="entry name" value="fmt"/>
    <property type="match status" value="1"/>
</dbReference>
<dbReference type="PANTHER" id="PTHR11138">
    <property type="entry name" value="METHIONYL-TRNA FORMYLTRANSFERASE"/>
    <property type="match status" value="1"/>
</dbReference>
<dbReference type="PANTHER" id="PTHR11138:SF5">
    <property type="entry name" value="METHIONYL-TRNA FORMYLTRANSFERASE, MITOCHONDRIAL"/>
    <property type="match status" value="1"/>
</dbReference>
<dbReference type="Pfam" id="PF02911">
    <property type="entry name" value="Formyl_trans_C"/>
    <property type="match status" value="1"/>
</dbReference>
<dbReference type="Pfam" id="PF00551">
    <property type="entry name" value="Formyl_trans_N"/>
    <property type="match status" value="1"/>
</dbReference>
<dbReference type="SUPFAM" id="SSF50486">
    <property type="entry name" value="FMT C-terminal domain-like"/>
    <property type="match status" value="1"/>
</dbReference>
<dbReference type="SUPFAM" id="SSF53328">
    <property type="entry name" value="Formyltransferase"/>
    <property type="match status" value="1"/>
</dbReference>
<reference key="1">
    <citation type="journal article" date="2007" name="Genome Res.">
        <title>Reductive evolution and niche adaptation inferred from the genome of Mycobacterium ulcerans, the causative agent of Buruli ulcer.</title>
        <authorList>
            <person name="Stinear T.P."/>
            <person name="Seemann T."/>
            <person name="Pidot S."/>
            <person name="Frigui W."/>
            <person name="Reysset G."/>
            <person name="Garnier T."/>
            <person name="Meurice G."/>
            <person name="Simon D."/>
            <person name="Bouchier C."/>
            <person name="Ma L."/>
            <person name="Tichit M."/>
            <person name="Porter J.L."/>
            <person name="Ryan J."/>
            <person name="Johnson P.D.R."/>
            <person name="Davies J.K."/>
            <person name="Jenkin G.A."/>
            <person name="Small P.L.C."/>
            <person name="Jones L.M."/>
            <person name="Tekaia F."/>
            <person name="Laval F."/>
            <person name="Daffe M."/>
            <person name="Parkhill J."/>
            <person name="Cole S.T."/>
        </authorList>
    </citation>
    <scope>NUCLEOTIDE SEQUENCE [LARGE SCALE GENOMIC DNA]</scope>
    <source>
        <strain>Agy99</strain>
    </source>
</reference>
<evidence type="ECO:0000255" key="1">
    <source>
        <dbReference type="HAMAP-Rule" id="MF_00182"/>
    </source>
</evidence>
<gene>
    <name evidence="1" type="primary">fmt</name>
    <name type="ordered locus">MUL_1802</name>
</gene>
<comment type="function">
    <text evidence="1">Attaches a formyl group to the free amino group of methionyl-tRNA(fMet). The formyl group appears to play a dual role in the initiator identity of N-formylmethionyl-tRNA by promoting its recognition by IF2 and preventing the misappropriation of this tRNA by the elongation apparatus.</text>
</comment>
<comment type="catalytic activity">
    <reaction evidence="1">
        <text>L-methionyl-tRNA(fMet) + (6R)-10-formyltetrahydrofolate = N-formyl-L-methionyl-tRNA(fMet) + (6S)-5,6,7,8-tetrahydrofolate + H(+)</text>
        <dbReference type="Rhea" id="RHEA:24380"/>
        <dbReference type="Rhea" id="RHEA-COMP:9952"/>
        <dbReference type="Rhea" id="RHEA-COMP:9953"/>
        <dbReference type="ChEBI" id="CHEBI:15378"/>
        <dbReference type="ChEBI" id="CHEBI:57453"/>
        <dbReference type="ChEBI" id="CHEBI:78530"/>
        <dbReference type="ChEBI" id="CHEBI:78844"/>
        <dbReference type="ChEBI" id="CHEBI:195366"/>
        <dbReference type="EC" id="2.1.2.9"/>
    </reaction>
</comment>
<comment type="similarity">
    <text evidence="1">Belongs to the Fmt family.</text>
</comment>
<sequence>MRLVFAGTPETALPALHQLIDSPRHDVIAVLTRPDAASGRRGKPEPSPVARAALERGIPVLRPSRPNSAEFVAELSELAPQCCAVVAYGALLGDALLGVPPQGWVNLHFSLLPAWRGAAPVQAAIAAGDAVTGATTFQIEPSLDSGPVYGVVTETIRPTDTAGDLLGRLAVSGAELLSATLDGIAEGALTARPQPADGVTLAPKISVEQARVRWELPVPIIERRIRAVTPNPGAWTLIGDLRVKLGPVYLDAAVEPPGPLPPGAIQVDRKHVWVGTGSEPLRLGQVQPPGKKLMNAADWARGARLDPSVRAS</sequence>
<name>FMT_MYCUA</name>
<keyword id="KW-0648">Protein biosynthesis</keyword>
<keyword id="KW-0808">Transferase</keyword>